<feature type="chain" id="PRO_1000081875" description="Large ribosomal subunit protein bL27">
    <location>
        <begin position="1"/>
        <end position="89"/>
    </location>
</feature>
<feature type="region of interest" description="Disordered" evidence="2">
    <location>
        <begin position="1"/>
        <end position="22"/>
    </location>
</feature>
<reference key="1">
    <citation type="journal article" date="2007" name="Nat. Genet.">
        <title>Genomic analysis of Bartonella identifies type IV secretion systems as host adaptability factors.</title>
        <authorList>
            <person name="Saenz H.L."/>
            <person name="Engel P."/>
            <person name="Stoeckli M.C."/>
            <person name="Lanz C."/>
            <person name="Raddatz G."/>
            <person name="Vayssier-Taussat M."/>
            <person name="Birtles R."/>
            <person name="Schuster S.C."/>
            <person name="Dehio C."/>
        </authorList>
    </citation>
    <scope>NUCLEOTIDE SEQUENCE [LARGE SCALE GENOMIC DNA]</scope>
    <source>
        <strain>CIP 105476 / IBS 506</strain>
    </source>
</reference>
<dbReference type="EMBL" id="AM260525">
    <property type="protein sequence ID" value="CAK00639.1"/>
    <property type="molecule type" value="Genomic_DNA"/>
</dbReference>
<dbReference type="RefSeq" id="WP_012230488.1">
    <property type="nucleotide sequence ID" value="NC_010161.1"/>
</dbReference>
<dbReference type="SMR" id="A9IM57"/>
<dbReference type="KEGG" id="btr:BT_0152"/>
<dbReference type="eggNOG" id="COG0211">
    <property type="taxonomic scope" value="Bacteria"/>
</dbReference>
<dbReference type="HOGENOM" id="CLU_095424_4_1_5"/>
<dbReference type="Proteomes" id="UP000001592">
    <property type="component" value="Chromosome"/>
</dbReference>
<dbReference type="GO" id="GO:0022625">
    <property type="term" value="C:cytosolic large ribosomal subunit"/>
    <property type="evidence" value="ECO:0007669"/>
    <property type="project" value="TreeGrafter"/>
</dbReference>
<dbReference type="GO" id="GO:0003735">
    <property type="term" value="F:structural constituent of ribosome"/>
    <property type="evidence" value="ECO:0007669"/>
    <property type="project" value="InterPro"/>
</dbReference>
<dbReference type="GO" id="GO:0006412">
    <property type="term" value="P:translation"/>
    <property type="evidence" value="ECO:0007669"/>
    <property type="project" value="UniProtKB-UniRule"/>
</dbReference>
<dbReference type="FunFam" id="2.40.50.100:FF:000001">
    <property type="entry name" value="50S ribosomal protein L27"/>
    <property type="match status" value="1"/>
</dbReference>
<dbReference type="Gene3D" id="2.40.50.100">
    <property type="match status" value="1"/>
</dbReference>
<dbReference type="HAMAP" id="MF_00539">
    <property type="entry name" value="Ribosomal_bL27"/>
    <property type="match status" value="1"/>
</dbReference>
<dbReference type="InterPro" id="IPR001684">
    <property type="entry name" value="Ribosomal_bL27"/>
</dbReference>
<dbReference type="InterPro" id="IPR018261">
    <property type="entry name" value="Ribosomal_bL27_CS"/>
</dbReference>
<dbReference type="NCBIfam" id="TIGR00062">
    <property type="entry name" value="L27"/>
    <property type="match status" value="1"/>
</dbReference>
<dbReference type="PANTHER" id="PTHR15893:SF0">
    <property type="entry name" value="LARGE RIBOSOMAL SUBUNIT PROTEIN BL27M"/>
    <property type="match status" value="1"/>
</dbReference>
<dbReference type="PANTHER" id="PTHR15893">
    <property type="entry name" value="RIBOSOMAL PROTEIN L27"/>
    <property type="match status" value="1"/>
</dbReference>
<dbReference type="Pfam" id="PF01016">
    <property type="entry name" value="Ribosomal_L27"/>
    <property type="match status" value="1"/>
</dbReference>
<dbReference type="PRINTS" id="PR00063">
    <property type="entry name" value="RIBOSOMALL27"/>
</dbReference>
<dbReference type="SUPFAM" id="SSF110324">
    <property type="entry name" value="Ribosomal L27 protein-like"/>
    <property type="match status" value="1"/>
</dbReference>
<dbReference type="PROSITE" id="PS00831">
    <property type="entry name" value="RIBOSOMAL_L27"/>
    <property type="match status" value="1"/>
</dbReference>
<evidence type="ECO:0000255" key="1">
    <source>
        <dbReference type="HAMAP-Rule" id="MF_00539"/>
    </source>
</evidence>
<evidence type="ECO:0000256" key="2">
    <source>
        <dbReference type="SAM" id="MobiDB-lite"/>
    </source>
</evidence>
<evidence type="ECO:0000305" key="3"/>
<accession>A9IM57</accession>
<comment type="similarity">
    <text evidence="1">Belongs to the bacterial ribosomal protein bL27 family.</text>
</comment>
<proteinExistence type="inferred from homology"/>
<name>RL27_BART1</name>
<organism>
    <name type="scientific">Bartonella tribocorum (strain CIP 105476 / IBS 506)</name>
    <dbReference type="NCBI Taxonomy" id="382640"/>
    <lineage>
        <taxon>Bacteria</taxon>
        <taxon>Pseudomonadati</taxon>
        <taxon>Pseudomonadota</taxon>
        <taxon>Alphaproteobacteria</taxon>
        <taxon>Hyphomicrobiales</taxon>
        <taxon>Bartonellaceae</taxon>
        <taxon>Bartonella</taxon>
    </lineage>
</organism>
<sequence length="89" mass="9579">MAHKKAGGSSRNGRDSESKRLGVKKFGGESVIAGNIIVRQRGTRWHPGDNVGIGKDHTLFALSEGKVSFQRKAGNRSYVSVIPMVEAAE</sequence>
<gene>
    <name evidence="1" type="primary">rpmA</name>
    <name type="ordered locus">BT_0152</name>
</gene>
<protein>
    <recommendedName>
        <fullName evidence="1">Large ribosomal subunit protein bL27</fullName>
    </recommendedName>
    <alternativeName>
        <fullName evidence="3">50S ribosomal protein L27</fullName>
    </alternativeName>
</protein>
<keyword id="KW-0687">Ribonucleoprotein</keyword>
<keyword id="KW-0689">Ribosomal protein</keyword>